<keyword id="KW-0044">Antibiotic</keyword>
<keyword id="KW-0929">Antimicrobial</keyword>
<keyword id="KW-0903">Direct protein sequencing</keyword>
<keyword id="KW-0964">Secreted</keyword>
<keyword id="KW-0800">Toxin</keyword>
<comment type="function">
    <text evidence="2">Insecticidal and antimicrobial peptide. Has insecticidal activity against larvae of flesh fly S.carnaria. Has antibacterial activity against Gram-positive bacterium B.subtilis B-501 (MIC=1.25 uM) and Gram-negative bacterium E.coli DH5alpha (MIC=2.5 uM).</text>
</comment>
<comment type="subcellular location">
    <subcellularLocation>
        <location evidence="2">Secreted</location>
    </subcellularLocation>
</comment>
<comment type="tissue specificity">
    <text evidence="5">Expressed by the venom gland.</text>
</comment>
<comment type="domain">
    <text evidence="1">Both the N-terminus (1-33) and the C-terminus (38-70) of the mature peptide form alpha-helices which probably disrupt target cell membranes. The linker region (34-37) probably derives from a processing quadruplet motif (PQM), found in propeptides of many zodatoxins, hinting at a fusion of two originally separate membrane-active peptides.</text>
</comment>
<comment type="mass spectrometry" mass="8198.8" error="0.5" method="MALDI" evidence="2"/>
<comment type="toxic dose">
    <text evidence="2">LD(50) is 40 ug/g in larvae of flesh fly S.carnaria.</text>
</comment>
<comment type="similarity">
    <text evidence="4">Belongs to the cationic peptide 06 (cytoinsectotoxin) family.</text>
</comment>
<evidence type="ECO:0000250" key="1">
    <source>
        <dbReference type="UniProtKB" id="P85253"/>
    </source>
</evidence>
<evidence type="ECO:0000269" key="2">
    <source>
    </source>
</evidence>
<evidence type="ECO:0000303" key="3">
    <source>
    </source>
</evidence>
<evidence type="ECO:0000305" key="4"/>
<evidence type="ECO:0000305" key="5">
    <source>
    </source>
</evidence>
<sequence length="70" mass="8198">SWDSIWKSAKNKMDKIMRQKVAKWMAKKEGKSVEEVQAKVDAMSKKDIRMHVISHYGKKAFEQLSKSLEE</sequence>
<proteinExistence type="evidence at protein level"/>
<dbReference type="SMR" id="C0HJV4"/>
<dbReference type="GO" id="GO:0005576">
    <property type="term" value="C:extracellular region"/>
    <property type="evidence" value="ECO:0007669"/>
    <property type="project" value="UniProtKB-SubCell"/>
</dbReference>
<dbReference type="GO" id="GO:0090729">
    <property type="term" value="F:toxin activity"/>
    <property type="evidence" value="ECO:0007669"/>
    <property type="project" value="UniProtKB-KW"/>
</dbReference>
<dbReference type="GO" id="GO:0042742">
    <property type="term" value="P:defense response to bacterium"/>
    <property type="evidence" value="ECO:0007669"/>
    <property type="project" value="UniProtKB-KW"/>
</dbReference>
<feature type="peptide" id="PRO_0000437250" description="Cytoinsectotoxin-2c" evidence="2">
    <location>
        <begin position="1"/>
        <end position="70"/>
    </location>
</feature>
<protein>
    <recommendedName>
        <fullName evidence="3">Cytoinsectotoxin-2c</fullName>
        <shortName evidence="3">CIT-2c</shortName>
    </recommendedName>
</protein>
<organism evidence="3">
    <name type="scientific">Lachesana tarabaevi</name>
    <name type="common">Spider</name>
    <dbReference type="NCBI Taxonomy" id="379576"/>
    <lineage>
        <taxon>Eukaryota</taxon>
        <taxon>Metazoa</taxon>
        <taxon>Ecdysozoa</taxon>
        <taxon>Arthropoda</taxon>
        <taxon>Chelicerata</taxon>
        <taxon>Arachnida</taxon>
        <taxon>Araneae</taxon>
        <taxon>Araneomorphae</taxon>
        <taxon>Entelegynae</taxon>
        <taxon>Entelegynae incertae sedis</taxon>
        <taxon>Zodariidae</taxon>
        <taxon>Lachesana</taxon>
    </lineage>
</organism>
<name>CTX23_LACTA</name>
<accession>C0HJV4</accession>
<reference evidence="4" key="1">
    <citation type="journal article" date="2016" name="Biochem. J.">
        <title>Lachesana tarabaevi, an expert in membrane-active toxins.</title>
        <authorList>
            <person name="Kuzmenkov A.I."/>
            <person name="Sachkova M.Y."/>
            <person name="Kovalchuk S.I."/>
            <person name="Grishin E.V."/>
            <person name="Vassilevski A.A."/>
        </authorList>
    </citation>
    <scope>PROTEIN SEQUENCE</scope>
    <scope>FUNCTION</scope>
    <scope>SUBCELLULAR LOCATION</scope>
    <scope>MASS SPECTROMETRY</scope>
    <scope>TOXIC DOSE</scope>
    <source>
        <tissue evidence="3">Venom</tissue>
    </source>
</reference>